<proteinExistence type="evidence at protein level"/>
<protein>
    <recommendedName>
        <fullName evidence="2">Bacteriocin rhamnosin A</fullName>
    </recommendedName>
</protein>
<accession>P86526</accession>
<comment type="function">
    <text evidence="1">Antibacterial activity against the Gram-positive bacterium M.lysodeikticus. It may act as a pore-forming protein, creating a channel in the cell membrane.</text>
</comment>
<comment type="subcellular location">
    <subcellularLocation>
        <location evidence="1">Secreted</location>
    </subcellularLocation>
</comment>
<comment type="mass spectrometry"/>
<organism>
    <name type="scientific">Lacticaseibacillus rhamnosus</name>
    <name type="common">Lactobacillus rhamnosus</name>
    <dbReference type="NCBI Taxonomy" id="47715"/>
    <lineage>
        <taxon>Bacteria</taxon>
        <taxon>Bacillati</taxon>
        <taxon>Bacillota</taxon>
        <taxon>Bacilli</taxon>
        <taxon>Lactobacillales</taxon>
        <taxon>Lactobacillaceae</taxon>
        <taxon>Lacticaseibacillus</taxon>
    </lineage>
</organism>
<reference evidence="3" key="1">
    <citation type="journal article" date="2009" name="J. Appl. Microbiol.">
        <title>The identification of a low molecular mass bacteriocin, rhamnosin A, produced by Lactobacillus rhamnosus strain 68.</title>
        <authorList>
            <person name="Dimitrijevic R."/>
            <person name="Stojanovic M."/>
            <person name="Zivkovic I."/>
            <person name="Petersen A."/>
            <person name="Jankov R.M."/>
            <person name="Dimitrijevic L."/>
            <person name="Gavrovic-Jankulovic M."/>
        </authorList>
    </citation>
    <scope>PROTEIN SEQUENCE</scope>
    <scope>FUNCTION</scope>
    <scope>SUBCELLULAR LOCATION</scope>
    <scope>MASS SPECTROMETRY</scope>
    <source>
        <strain evidence="1">68</strain>
    </source>
</reference>
<evidence type="ECO:0000269" key="1">
    <source>
    </source>
</evidence>
<evidence type="ECO:0000303" key="2">
    <source>
    </source>
</evidence>
<evidence type="ECO:0000305" key="3"/>
<feature type="chain" id="PRO_0000394468" description="Bacteriocin rhamnosin A">
    <location>
        <begin position="1"/>
        <end position="13" status="greater than"/>
    </location>
</feature>
<feature type="unsure residue" description="V or K" evidence="1">
    <location>
        <position position="2"/>
    </location>
</feature>
<feature type="unsure residue" description="P or T" evidence="1">
    <location>
        <position position="3"/>
    </location>
</feature>
<feature type="non-terminal residue" evidence="2">
    <location>
        <position position="13"/>
    </location>
</feature>
<sequence>AVPAVRKTNETLD</sequence>
<dbReference type="GO" id="GO:0005576">
    <property type="term" value="C:extracellular region"/>
    <property type="evidence" value="ECO:0000314"/>
    <property type="project" value="UniProtKB"/>
</dbReference>
<dbReference type="GO" id="GO:0051838">
    <property type="term" value="P:cytolysis by host of symbiont cells"/>
    <property type="evidence" value="ECO:0000314"/>
    <property type="project" value="UniProtKB"/>
</dbReference>
<dbReference type="GO" id="GO:0050830">
    <property type="term" value="P:defense response to Gram-positive bacterium"/>
    <property type="evidence" value="ECO:0000314"/>
    <property type="project" value="UniProtKB"/>
</dbReference>
<keyword id="KW-0044">Antibiotic</keyword>
<keyword id="KW-0929">Antimicrobial</keyword>
<keyword id="KW-0078">Bacteriocin</keyword>
<keyword id="KW-0903">Direct protein sequencing</keyword>
<keyword id="KW-0964">Secreted</keyword>
<name>RHAMA_LACRH</name>